<keyword id="KW-1185">Reference proteome</keyword>
<gene>
    <name type="primary">ORF61</name>
</gene>
<dbReference type="EMBL" id="M75136">
    <property type="protein sequence ID" value="AAA88164.1"/>
    <property type="molecule type" value="Genomic_DNA"/>
</dbReference>
<dbReference type="PIR" id="H36792">
    <property type="entry name" value="H36792"/>
</dbReference>
<dbReference type="RefSeq" id="NP_041152.1">
    <property type="nucleotide sequence ID" value="NC_001493.2"/>
</dbReference>
<dbReference type="GeneID" id="1488387"/>
<dbReference type="KEGG" id="vg:1488387"/>
<dbReference type="Proteomes" id="UP000007643">
    <property type="component" value="Segment"/>
</dbReference>
<reference key="1">
    <citation type="journal article" date="1992" name="Virology">
        <title>Channel catfish virus: a new type of herpesvirus.</title>
        <authorList>
            <person name="Davison A.J."/>
        </authorList>
    </citation>
    <scope>NUCLEOTIDE SEQUENCE [LARGE SCALE GENOMIC DNA]</scope>
</reference>
<proteinExistence type="predicted"/>
<feature type="chain" id="PRO_0000222140" description="Uncharacterized protein ORF61">
    <location>
        <begin position="1"/>
        <end position="319"/>
    </location>
</feature>
<accession>Q00122</accession>
<name>VG61_ICHVA</name>
<organism>
    <name type="scientific">Ictalurid herpesvirus 1 (strain Auburn)</name>
    <name type="common">IcHV-1</name>
    <name type="synonym">Channel catfish herpesvirus</name>
    <dbReference type="NCBI Taxonomy" id="766178"/>
    <lineage>
        <taxon>Viruses</taxon>
        <taxon>Duplodnaviria</taxon>
        <taxon>Heunggongvirae</taxon>
        <taxon>Peploviricota</taxon>
        <taxon>Herviviricetes</taxon>
        <taxon>Herpesvirales</taxon>
        <taxon>Alloherpesviridae</taxon>
        <taxon>Ictavirus</taxon>
        <taxon>Ictavirus ictaluridallo1</taxon>
        <taxon>Ictalurid herpesvirus 1</taxon>
    </lineage>
</organism>
<organismHost>
    <name type="scientific">Ictaluridae</name>
    <name type="common">bullhead catfishes</name>
    <dbReference type="NCBI Taxonomy" id="7996"/>
</organismHost>
<sequence length="319" mass="36910">MISVARAMTDSDSLVVSTVDRNSDMKFIWPEKVYFRGCTHRSIPLLDDAAFNERMLCQDDLTLLKFGLDFFMRSTPFLKSFWLTEFGLVMVTDALTEYAMRIWRAINRVHLGDTDAPTVAEITRHINHLSGRTMMIPSIYSGPKNGQYPILNKMHELFTLFATGKISILNHEILPEAALLHEQTHDLLDRLTRDLPLFLEYEDGPRSDPFTHVDRLGKLRARGEVVMYACVEPTPVPRSVDLWEHMSEMYAESCYWLLQRETPRNMIALMDFIHVKTGYSTTTNELMGYMRDRTSTIDILAFLFELTAGDFTWNFWALV</sequence>
<protein>
    <recommendedName>
        <fullName>Uncharacterized protein ORF61</fullName>
    </recommendedName>
</protein>